<keyword id="KW-0150">Chloroplast</keyword>
<keyword id="KW-0934">Plastid</keyword>
<keyword id="KW-0687">Ribonucleoprotein</keyword>
<keyword id="KW-0689">Ribosomal protein</keyword>
<keyword id="KW-0694">RNA-binding</keyword>
<keyword id="KW-0699">rRNA-binding</keyword>
<protein>
    <recommendedName>
        <fullName evidence="2">Large ribosomal subunit protein uL5c</fullName>
    </recommendedName>
    <alternativeName>
        <fullName>50S ribosomal protein L5, chloroplastic</fullName>
    </alternativeName>
</protein>
<reference key="1">
    <citation type="journal article" date="2000" name="J. Mol. Evol.">
        <title>The structure and gene repertoire of an ancient red algal plastid genome.</title>
        <authorList>
            <person name="Gloeckner G."/>
            <person name="Rosenthal A."/>
            <person name="Valentin K.-U."/>
        </authorList>
    </citation>
    <scope>NUCLEOTIDE SEQUENCE [LARGE SCALE GENOMIC DNA]</scope>
    <source>
        <strain>RK-1</strain>
    </source>
</reference>
<organism>
    <name type="scientific">Cyanidium caldarium</name>
    <name type="common">Red alga</name>
    <dbReference type="NCBI Taxonomy" id="2771"/>
    <lineage>
        <taxon>Eukaryota</taxon>
        <taxon>Rhodophyta</taxon>
        <taxon>Bangiophyceae</taxon>
        <taxon>Cyanidiales</taxon>
        <taxon>Cyanidiaceae</taxon>
        <taxon>Cyanidium</taxon>
    </lineage>
</organism>
<comment type="function">
    <text evidence="1">Binds 5S rRNA, forms part of the central protuberance of the 50S subunit.</text>
</comment>
<comment type="subunit">
    <text evidence="1">Part of the 50S ribosomal subunit; contacts the 5S rRNA.</text>
</comment>
<comment type="subcellular location">
    <subcellularLocation>
        <location>Plastid</location>
        <location>Chloroplast</location>
    </subcellularLocation>
</comment>
<comment type="similarity">
    <text evidence="2">Belongs to the universal ribosomal protein uL5 family.</text>
</comment>
<sequence>MSGGNLQHLYFNKIRVELQKQFEYTNVHQIPKLTKITLNRGLGTLYQQSPKVFESSVSDLMLITGQKPRFNKSKKSIAGFKLREGTVVGLSVTLRRKKMYAFLEKLIHFSLPAARDFRGLSTKNFDGLGNYNLGIKEHAIFPEIDFDKIDHSYGLNICIVTTANNDIEGKALLKFLGMPFKD</sequence>
<evidence type="ECO:0000250" key="1"/>
<evidence type="ECO:0000305" key="2"/>
<feature type="chain" id="PRO_0000125039" description="Large ribosomal subunit protein uL5c">
    <location>
        <begin position="1"/>
        <end position="182"/>
    </location>
</feature>
<gene>
    <name type="primary">rpl5</name>
</gene>
<dbReference type="EMBL" id="AF022186">
    <property type="protein sequence ID" value="AAF12919.1"/>
    <property type="molecule type" value="Genomic_DNA"/>
</dbReference>
<dbReference type="RefSeq" id="NP_045175.1">
    <property type="nucleotide sequence ID" value="NC_001840.1"/>
</dbReference>
<dbReference type="SMR" id="Q9TLU4"/>
<dbReference type="GeneID" id="800176"/>
<dbReference type="GO" id="GO:0009507">
    <property type="term" value="C:chloroplast"/>
    <property type="evidence" value="ECO:0007669"/>
    <property type="project" value="UniProtKB-SubCell"/>
</dbReference>
<dbReference type="GO" id="GO:1990904">
    <property type="term" value="C:ribonucleoprotein complex"/>
    <property type="evidence" value="ECO:0007669"/>
    <property type="project" value="UniProtKB-KW"/>
</dbReference>
<dbReference type="GO" id="GO:0005840">
    <property type="term" value="C:ribosome"/>
    <property type="evidence" value="ECO:0007669"/>
    <property type="project" value="UniProtKB-KW"/>
</dbReference>
<dbReference type="GO" id="GO:0019843">
    <property type="term" value="F:rRNA binding"/>
    <property type="evidence" value="ECO:0007669"/>
    <property type="project" value="UniProtKB-UniRule"/>
</dbReference>
<dbReference type="GO" id="GO:0003735">
    <property type="term" value="F:structural constituent of ribosome"/>
    <property type="evidence" value="ECO:0007669"/>
    <property type="project" value="InterPro"/>
</dbReference>
<dbReference type="GO" id="GO:0006412">
    <property type="term" value="P:translation"/>
    <property type="evidence" value="ECO:0007669"/>
    <property type="project" value="UniProtKB-UniRule"/>
</dbReference>
<dbReference type="FunFam" id="3.30.1440.10:FF:000001">
    <property type="entry name" value="50S ribosomal protein L5"/>
    <property type="match status" value="1"/>
</dbReference>
<dbReference type="Gene3D" id="3.30.1440.10">
    <property type="match status" value="1"/>
</dbReference>
<dbReference type="HAMAP" id="MF_01333_B">
    <property type="entry name" value="Ribosomal_uL5_B"/>
    <property type="match status" value="1"/>
</dbReference>
<dbReference type="InterPro" id="IPR002132">
    <property type="entry name" value="Ribosomal_uL5"/>
</dbReference>
<dbReference type="InterPro" id="IPR020930">
    <property type="entry name" value="Ribosomal_uL5_bac-type"/>
</dbReference>
<dbReference type="InterPro" id="IPR031309">
    <property type="entry name" value="Ribosomal_uL5_C"/>
</dbReference>
<dbReference type="InterPro" id="IPR022803">
    <property type="entry name" value="Ribosomal_uL5_dom_sf"/>
</dbReference>
<dbReference type="InterPro" id="IPR031310">
    <property type="entry name" value="Ribosomal_uL5_N"/>
</dbReference>
<dbReference type="NCBIfam" id="NF000585">
    <property type="entry name" value="PRK00010.1"/>
    <property type="match status" value="1"/>
</dbReference>
<dbReference type="PANTHER" id="PTHR11994">
    <property type="entry name" value="60S RIBOSOMAL PROTEIN L11-RELATED"/>
    <property type="match status" value="1"/>
</dbReference>
<dbReference type="Pfam" id="PF00281">
    <property type="entry name" value="Ribosomal_L5"/>
    <property type="match status" value="1"/>
</dbReference>
<dbReference type="Pfam" id="PF00673">
    <property type="entry name" value="Ribosomal_L5_C"/>
    <property type="match status" value="1"/>
</dbReference>
<dbReference type="PIRSF" id="PIRSF002161">
    <property type="entry name" value="Ribosomal_L5"/>
    <property type="match status" value="1"/>
</dbReference>
<dbReference type="SUPFAM" id="SSF55282">
    <property type="entry name" value="RL5-like"/>
    <property type="match status" value="1"/>
</dbReference>
<accession>Q9TLU4</accession>
<name>RK5_CYACA</name>
<geneLocation type="chloroplast"/>
<proteinExistence type="inferred from homology"/>